<protein>
    <recommendedName>
        <fullName evidence="1">Large ribosomal subunit protein bL36</fullName>
    </recommendedName>
    <alternativeName>
        <fullName evidence="2">50S ribosomal protein L36</fullName>
    </alternativeName>
</protein>
<organism>
    <name type="scientific">Bacillus cereus (strain 03BB102)</name>
    <dbReference type="NCBI Taxonomy" id="572264"/>
    <lineage>
        <taxon>Bacteria</taxon>
        <taxon>Bacillati</taxon>
        <taxon>Bacillota</taxon>
        <taxon>Bacilli</taxon>
        <taxon>Bacillales</taxon>
        <taxon>Bacillaceae</taxon>
        <taxon>Bacillus</taxon>
        <taxon>Bacillus cereus group</taxon>
    </lineage>
</organism>
<proteinExistence type="inferred from homology"/>
<dbReference type="EMBL" id="CP001407">
    <property type="protein sequence ID" value="ACO29788.1"/>
    <property type="molecule type" value="Genomic_DNA"/>
</dbReference>
<dbReference type="RefSeq" id="WP_000868344.1">
    <property type="nucleotide sequence ID" value="NZ_CP009318.1"/>
</dbReference>
<dbReference type="SMR" id="C1ET63"/>
<dbReference type="GeneID" id="97822099"/>
<dbReference type="KEGG" id="bcx:BCA_0163"/>
<dbReference type="PATRIC" id="fig|572264.18.peg.198"/>
<dbReference type="Proteomes" id="UP000002210">
    <property type="component" value="Chromosome"/>
</dbReference>
<dbReference type="GO" id="GO:0005737">
    <property type="term" value="C:cytoplasm"/>
    <property type="evidence" value="ECO:0007669"/>
    <property type="project" value="UniProtKB-ARBA"/>
</dbReference>
<dbReference type="GO" id="GO:1990904">
    <property type="term" value="C:ribonucleoprotein complex"/>
    <property type="evidence" value="ECO:0007669"/>
    <property type="project" value="UniProtKB-KW"/>
</dbReference>
<dbReference type="GO" id="GO:0005840">
    <property type="term" value="C:ribosome"/>
    <property type="evidence" value="ECO:0007669"/>
    <property type="project" value="UniProtKB-KW"/>
</dbReference>
<dbReference type="GO" id="GO:0003735">
    <property type="term" value="F:structural constituent of ribosome"/>
    <property type="evidence" value="ECO:0007669"/>
    <property type="project" value="InterPro"/>
</dbReference>
<dbReference type="GO" id="GO:0006412">
    <property type="term" value="P:translation"/>
    <property type="evidence" value="ECO:0007669"/>
    <property type="project" value="UniProtKB-UniRule"/>
</dbReference>
<dbReference type="HAMAP" id="MF_00251">
    <property type="entry name" value="Ribosomal_bL36"/>
    <property type="match status" value="1"/>
</dbReference>
<dbReference type="InterPro" id="IPR000473">
    <property type="entry name" value="Ribosomal_bL36"/>
</dbReference>
<dbReference type="InterPro" id="IPR035977">
    <property type="entry name" value="Ribosomal_bL36_sp"/>
</dbReference>
<dbReference type="NCBIfam" id="TIGR01022">
    <property type="entry name" value="rpmJ_bact"/>
    <property type="match status" value="1"/>
</dbReference>
<dbReference type="PANTHER" id="PTHR42888">
    <property type="entry name" value="50S RIBOSOMAL PROTEIN L36, CHLOROPLASTIC"/>
    <property type="match status" value="1"/>
</dbReference>
<dbReference type="PANTHER" id="PTHR42888:SF1">
    <property type="entry name" value="LARGE RIBOSOMAL SUBUNIT PROTEIN BL36C"/>
    <property type="match status" value="1"/>
</dbReference>
<dbReference type="Pfam" id="PF00444">
    <property type="entry name" value="Ribosomal_L36"/>
    <property type="match status" value="1"/>
</dbReference>
<dbReference type="SUPFAM" id="SSF57840">
    <property type="entry name" value="Ribosomal protein L36"/>
    <property type="match status" value="1"/>
</dbReference>
<dbReference type="PROSITE" id="PS00828">
    <property type="entry name" value="RIBOSOMAL_L36"/>
    <property type="match status" value="1"/>
</dbReference>
<feature type="chain" id="PRO_1000196163" description="Large ribosomal subunit protein bL36">
    <location>
        <begin position="1"/>
        <end position="37"/>
    </location>
</feature>
<accession>C1ET63</accession>
<reference key="1">
    <citation type="submission" date="2009-02" db="EMBL/GenBank/DDBJ databases">
        <title>Genome sequence of Bacillus cereus 03BB102.</title>
        <authorList>
            <person name="Dodson R.J."/>
            <person name="Jackson P."/>
            <person name="Munk A.C."/>
            <person name="Brettin T."/>
            <person name="Bruce D."/>
            <person name="Detter C."/>
            <person name="Tapia R."/>
            <person name="Han C."/>
            <person name="Sutton G."/>
            <person name="Sims D."/>
        </authorList>
    </citation>
    <scope>NUCLEOTIDE SEQUENCE [LARGE SCALE GENOMIC DNA]</scope>
    <source>
        <strain>03BB102</strain>
    </source>
</reference>
<evidence type="ECO:0000255" key="1">
    <source>
        <dbReference type="HAMAP-Rule" id="MF_00251"/>
    </source>
</evidence>
<evidence type="ECO:0000305" key="2"/>
<keyword id="KW-0687">Ribonucleoprotein</keyword>
<keyword id="KW-0689">Ribosomal protein</keyword>
<comment type="similarity">
    <text evidence="1">Belongs to the bacterial ribosomal protein bL36 family.</text>
</comment>
<name>RL36_BACC3</name>
<gene>
    <name evidence="1" type="primary">rpmJ</name>
    <name type="ordered locus">BCA_0163</name>
</gene>
<sequence>MKVRPSVKPICEKCKVIRRRGKVMVICENPKHKQKQG</sequence>